<sequence>MRGTAGVPDQPVPTPTPSVPTSSSPVPKPPTQGNKKWCVPKAEATDAQLQSNIDYVCSQSGMDCGPIQANGACFNPNTVRAHASYAMNSWYQSKGRNDFDCDFSGTGAITSSDPSNGSCSFLS</sequence>
<evidence type="ECO:0000250" key="1"/>
<evidence type="ECO:0000256" key="2">
    <source>
        <dbReference type="SAM" id="MobiDB-lite"/>
    </source>
</evidence>
<evidence type="ECO:0000269" key="3">
    <source>
    </source>
</evidence>
<evidence type="ECO:0000269" key="4">
    <source>
    </source>
</evidence>
<evidence type="ECO:0000269" key="5">
    <source>
    </source>
</evidence>
<feature type="signal peptide" evidence="3">
    <location>
        <begin position="1"/>
        <end position="21"/>
    </location>
</feature>
<feature type="chain" id="PRO_0000421082" description="Major pollen allergen Ole e 10">
    <location>
        <begin position="22"/>
        <end position="123"/>
    </location>
</feature>
<feature type="region of interest" description="Disordered" evidence="2">
    <location>
        <begin position="1"/>
        <end position="37"/>
    </location>
</feature>
<feature type="disulfide bond" evidence="1">
    <location>
        <begin position="38"/>
        <end position="101"/>
    </location>
</feature>
<organism>
    <name type="scientific">Olea europaea</name>
    <name type="common">Common olive</name>
    <dbReference type="NCBI Taxonomy" id="4146"/>
    <lineage>
        <taxon>Eukaryota</taxon>
        <taxon>Viridiplantae</taxon>
        <taxon>Streptophyta</taxon>
        <taxon>Embryophyta</taxon>
        <taxon>Tracheophyta</taxon>
        <taxon>Spermatophyta</taxon>
        <taxon>Magnoliopsida</taxon>
        <taxon>eudicotyledons</taxon>
        <taxon>Gunneridae</taxon>
        <taxon>Pentapetalae</taxon>
        <taxon>asterids</taxon>
        <taxon>lamiids</taxon>
        <taxon>Lamiales</taxon>
        <taxon>Oleaceae</taxon>
        <taxon>Oleeae</taxon>
        <taxon>Olea</taxon>
    </lineage>
</organism>
<name>ALL10_OLEEU</name>
<protein>
    <recommendedName>
        <fullName>Major pollen allergen Ole e 10</fullName>
    </recommendedName>
    <allergenName>Ole e 10</allergenName>
</protein>
<comment type="function">
    <text evidence="4">Carbohydrate-binding protein binding preferentially 1,3-beta-glucans. May be involved in pollen tube wall re-formation during germination.</text>
</comment>
<comment type="subcellular location">
    <subcellularLocation>
        <location evidence="4">Cytoplasmic vesicle</location>
    </subcellularLocation>
</comment>
<comment type="tissue specificity">
    <text evidence="4">Expressed in mature and germinating pollen.</text>
</comment>
<comment type="PTM">
    <text>The N-terminus is blocked.</text>
</comment>
<comment type="PTM">
    <text evidence="5">Phosphorylated at Ser-24 when expressed as a recombinant protein in a heterologous system.</text>
</comment>
<comment type="PTM">
    <text>Not glycosylated.</text>
</comment>
<comment type="PTM">
    <text evidence="1">Contains two additional disulfide bonds.</text>
</comment>
<comment type="allergen">
    <text>Causes an allergic reaction in human. Allergen from olive pollen.</text>
</comment>
<keyword id="KW-0020">Allergen</keyword>
<keyword id="KW-0968">Cytoplasmic vesicle</keyword>
<keyword id="KW-0903">Direct protein sequencing</keyword>
<keyword id="KW-1015">Disulfide bond</keyword>
<keyword id="KW-0597">Phosphoprotein</keyword>
<keyword id="KW-0732">Signal</keyword>
<accession>Q84V39</accession>
<proteinExistence type="evidence at protein level"/>
<dbReference type="EMBL" id="AY082335">
    <property type="protein sequence ID" value="AAL92578.1"/>
    <property type="molecule type" value="mRNA"/>
</dbReference>
<dbReference type="SMR" id="Q84V39"/>
<dbReference type="Allergome" id="1319">
    <property type="allergen name" value="Ole e 10"/>
</dbReference>
<dbReference type="Allergome" id="3382">
    <property type="allergen name" value="Ole e 10.0101"/>
</dbReference>
<dbReference type="CAZy" id="CBM43">
    <property type="family name" value="Carbohydrate-Binding Module Family 43"/>
</dbReference>
<dbReference type="GO" id="GO:0031410">
    <property type="term" value="C:cytoplasmic vesicle"/>
    <property type="evidence" value="ECO:0007669"/>
    <property type="project" value="UniProtKB-KW"/>
</dbReference>
<dbReference type="GO" id="GO:0009506">
    <property type="term" value="C:plasmodesma"/>
    <property type="evidence" value="ECO:0007669"/>
    <property type="project" value="UniProtKB-ARBA"/>
</dbReference>
<dbReference type="FunFam" id="1.20.58.1040:FF:000003">
    <property type="entry name" value="glucan endo-1,3-beta-glucosidase 7"/>
    <property type="match status" value="1"/>
</dbReference>
<dbReference type="Gene3D" id="1.20.58.1040">
    <property type="match status" value="1"/>
</dbReference>
<dbReference type="InterPro" id="IPR012946">
    <property type="entry name" value="X8"/>
</dbReference>
<dbReference type="InterPro" id="IPR044788">
    <property type="entry name" value="X8_dom_prot"/>
</dbReference>
<dbReference type="PANTHER" id="PTHR31044">
    <property type="entry name" value="BETA-1,3 GLUCANASE"/>
    <property type="match status" value="1"/>
</dbReference>
<dbReference type="PANTHER" id="PTHR31044:SF130">
    <property type="entry name" value="CARBOHYDRATE-BINDING X8 DOMAIN SUPERFAMILY PROTEIN"/>
    <property type="match status" value="1"/>
</dbReference>
<dbReference type="Pfam" id="PF07983">
    <property type="entry name" value="X8"/>
    <property type="match status" value="1"/>
</dbReference>
<dbReference type="SMART" id="SM00768">
    <property type="entry name" value="X8"/>
    <property type="match status" value="1"/>
</dbReference>
<reference key="1">
    <citation type="journal article" date="2004" name="J. Immunol.">
        <title>A major allergen from pollen defines a novel family of plant proteins and shows intra- and interspecie cross-reactivity.</title>
        <authorList>
            <person name="Barral P."/>
            <person name="Batanero E."/>
            <person name="Palomares O."/>
            <person name="Quiralte J."/>
            <person name="Villalba M."/>
            <person name="Rodriguez R."/>
        </authorList>
    </citation>
    <scope>NUCLEOTIDE SEQUENCE [MRNA]</scope>
    <scope>PROTEIN SEQUENCE OF 22-63 AND 75-94</scope>
    <source>
        <tissue>Pollen</tissue>
    </source>
</reference>
<reference key="2">
    <citation type="journal article" date="2005" name="Protein Expr. Purif.">
        <title>Expression of the major olive pollen allergen Ole e 10 in the yeast Pichia pastoris: evidence of post-translational modifications.</title>
        <authorList>
            <person name="Barral P."/>
            <person name="Batanero E."/>
            <person name="Villalba M."/>
            <person name="Rodriguez R."/>
        </authorList>
    </citation>
    <scope>NUCLEOTIDE SEQUENCE [MRNA]</scope>
    <scope>PHOSPHORYLATION</scope>
    <source>
        <tissue>Pollen</tissue>
    </source>
</reference>
<reference key="3">
    <citation type="journal article" date="2005" name="Biochem. J.">
        <title>An olive pollen protein with allergenic activity, Ole e 10, defines a novel family of carbohydrate-binding modules and is potentially implicated in pollen germination.</title>
        <authorList>
            <person name="Barral P."/>
            <person name="Suarez C."/>
            <person name="Batanero E."/>
            <person name="Alfonso C."/>
            <person name="Alche J.D."/>
            <person name="Rodriguez-Garcia M.I."/>
            <person name="Villalba M."/>
            <person name="Rivas G."/>
            <person name="Rodriguez R."/>
        </authorList>
    </citation>
    <scope>FUNCTION</scope>
    <scope>TISSUE SPECIFICITY</scope>
    <scope>SUBCELLULAR LOCATION</scope>
</reference>
<reference key="4">
    <citation type="journal article" date="2012" name="Talanta">
        <title>Analysis of olive allergens.</title>
        <authorList>
            <person name="Esteve C."/>
            <person name="Montealegre C."/>
            <person name="Marina M.L."/>
            <person name="Garcia M.C."/>
        </authorList>
    </citation>
    <scope>REVIEW</scope>
    <scope>NOMENCLATURE</scope>
</reference>